<organism>
    <name type="scientific">Listeria welshimeri serovar 6b (strain ATCC 35897 / DSM 20650 / CCUG 15529 / CIP 8149 / NCTC 11857 / SLCC 5334 / V8)</name>
    <dbReference type="NCBI Taxonomy" id="386043"/>
    <lineage>
        <taxon>Bacteria</taxon>
        <taxon>Bacillati</taxon>
        <taxon>Bacillota</taxon>
        <taxon>Bacilli</taxon>
        <taxon>Bacillales</taxon>
        <taxon>Listeriaceae</taxon>
        <taxon>Listeria</taxon>
    </lineage>
</organism>
<gene>
    <name evidence="1" type="primary">argB</name>
    <name type="ordered locus">lwe1602</name>
</gene>
<comment type="function">
    <text evidence="1">Catalyzes the ATP-dependent phosphorylation of N-acetyl-L-glutamate.</text>
</comment>
<comment type="catalytic activity">
    <reaction evidence="1">
        <text>N-acetyl-L-glutamate + ATP = N-acetyl-L-glutamyl 5-phosphate + ADP</text>
        <dbReference type="Rhea" id="RHEA:14629"/>
        <dbReference type="ChEBI" id="CHEBI:30616"/>
        <dbReference type="ChEBI" id="CHEBI:44337"/>
        <dbReference type="ChEBI" id="CHEBI:57936"/>
        <dbReference type="ChEBI" id="CHEBI:456216"/>
        <dbReference type="EC" id="2.7.2.8"/>
    </reaction>
</comment>
<comment type="pathway">
    <text evidence="1">Amino-acid biosynthesis; L-arginine biosynthesis; N(2)-acetyl-L-ornithine from L-glutamate: step 2/4.</text>
</comment>
<comment type="subcellular location">
    <subcellularLocation>
        <location evidence="1">Cytoplasm</location>
    </subcellularLocation>
</comment>
<comment type="similarity">
    <text evidence="1">Belongs to the acetylglutamate kinase family. ArgB subfamily.</text>
</comment>
<protein>
    <recommendedName>
        <fullName evidence="1">Acetylglutamate kinase</fullName>
        <ecNumber evidence="1">2.7.2.8</ecNumber>
    </recommendedName>
    <alternativeName>
        <fullName evidence="1">N-acetyl-L-glutamate 5-phosphotransferase</fullName>
    </alternativeName>
    <alternativeName>
        <fullName evidence="1">NAG kinase</fullName>
        <shortName evidence="1">NAGK</shortName>
    </alternativeName>
</protein>
<dbReference type="EC" id="2.7.2.8" evidence="1"/>
<dbReference type="EMBL" id="AM263198">
    <property type="protein sequence ID" value="CAK21020.1"/>
    <property type="molecule type" value="Genomic_DNA"/>
</dbReference>
<dbReference type="RefSeq" id="WP_011702387.1">
    <property type="nucleotide sequence ID" value="NC_008555.1"/>
</dbReference>
<dbReference type="SMR" id="A0AJ38"/>
<dbReference type="STRING" id="386043.lwe1602"/>
<dbReference type="GeneID" id="61189479"/>
<dbReference type="KEGG" id="lwe:lwe1602"/>
<dbReference type="eggNOG" id="COG0548">
    <property type="taxonomic scope" value="Bacteria"/>
</dbReference>
<dbReference type="HOGENOM" id="CLU_053680_1_0_9"/>
<dbReference type="OrthoDB" id="9803155at2"/>
<dbReference type="UniPathway" id="UPA00068">
    <property type="reaction ID" value="UER00107"/>
</dbReference>
<dbReference type="Proteomes" id="UP000000779">
    <property type="component" value="Chromosome"/>
</dbReference>
<dbReference type="GO" id="GO:0005737">
    <property type="term" value="C:cytoplasm"/>
    <property type="evidence" value="ECO:0007669"/>
    <property type="project" value="UniProtKB-SubCell"/>
</dbReference>
<dbReference type="GO" id="GO:0003991">
    <property type="term" value="F:acetylglutamate kinase activity"/>
    <property type="evidence" value="ECO:0007669"/>
    <property type="project" value="UniProtKB-UniRule"/>
</dbReference>
<dbReference type="GO" id="GO:0005524">
    <property type="term" value="F:ATP binding"/>
    <property type="evidence" value="ECO:0007669"/>
    <property type="project" value="UniProtKB-UniRule"/>
</dbReference>
<dbReference type="GO" id="GO:0042450">
    <property type="term" value="P:arginine biosynthetic process via ornithine"/>
    <property type="evidence" value="ECO:0007669"/>
    <property type="project" value="UniProtKB-UniRule"/>
</dbReference>
<dbReference type="GO" id="GO:0006526">
    <property type="term" value="P:L-arginine biosynthetic process"/>
    <property type="evidence" value="ECO:0007669"/>
    <property type="project" value="UniProtKB-UniPathway"/>
</dbReference>
<dbReference type="CDD" id="cd04238">
    <property type="entry name" value="AAK_NAGK-like"/>
    <property type="match status" value="1"/>
</dbReference>
<dbReference type="Gene3D" id="3.40.1160.10">
    <property type="entry name" value="Acetylglutamate kinase-like"/>
    <property type="match status" value="1"/>
</dbReference>
<dbReference type="HAMAP" id="MF_00082">
    <property type="entry name" value="ArgB"/>
    <property type="match status" value="1"/>
</dbReference>
<dbReference type="InterPro" id="IPR036393">
    <property type="entry name" value="AceGlu_kinase-like_sf"/>
</dbReference>
<dbReference type="InterPro" id="IPR004662">
    <property type="entry name" value="AcgluKinase_fam"/>
</dbReference>
<dbReference type="InterPro" id="IPR037528">
    <property type="entry name" value="ArgB"/>
</dbReference>
<dbReference type="InterPro" id="IPR001048">
    <property type="entry name" value="Asp/Glu/Uridylate_kinase"/>
</dbReference>
<dbReference type="NCBIfam" id="TIGR00761">
    <property type="entry name" value="argB"/>
    <property type="match status" value="1"/>
</dbReference>
<dbReference type="PANTHER" id="PTHR23342">
    <property type="entry name" value="N-ACETYLGLUTAMATE SYNTHASE"/>
    <property type="match status" value="1"/>
</dbReference>
<dbReference type="PANTHER" id="PTHR23342:SF0">
    <property type="entry name" value="N-ACETYLGLUTAMATE SYNTHASE, MITOCHONDRIAL"/>
    <property type="match status" value="1"/>
</dbReference>
<dbReference type="Pfam" id="PF00696">
    <property type="entry name" value="AA_kinase"/>
    <property type="match status" value="1"/>
</dbReference>
<dbReference type="PIRSF" id="PIRSF000728">
    <property type="entry name" value="NAGK"/>
    <property type="match status" value="1"/>
</dbReference>
<dbReference type="SUPFAM" id="SSF53633">
    <property type="entry name" value="Carbamate kinase-like"/>
    <property type="match status" value="1"/>
</dbReference>
<reference key="1">
    <citation type="journal article" date="2006" name="J. Bacteriol.">
        <title>Whole-genome sequence of Listeria welshimeri reveals common steps in genome reduction with Listeria innocua as compared to Listeria monocytogenes.</title>
        <authorList>
            <person name="Hain T."/>
            <person name="Steinweg C."/>
            <person name="Kuenne C.T."/>
            <person name="Billion A."/>
            <person name="Ghai R."/>
            <person name="Chatterjee S.S."/>
            <person name="Domann E."/>
            <person name="Kaerst U."/>
            <person name="Goesmann A."/>
            <person name="Bekel T."/>
            <person name="Bartels D."/>
            <person name="Kaiser O."/>
            <person name="Meyer F."/>
            <person name="Puehler A."/>
            <person name="Weisshaar B."/>
            <person name="Wehland J."/>
            <person name="Liang C."/>
            <person name="Dandekar T."/>
            <person name="Lampidis R."/>
            <person name="Kreft J."/>
            <person name="Goebel W."/>
            <person name="Chakraborty T."/>
        </authorList>
    </citation>
    <scope>NUCLEOTIDE SEQUENCE [LARGE SCALE GENOMIC DNA]</scope>
    <source>
        <strain>ATCC 35897 / DSM 20650 / CCUG 15529 / CIP 8149 / NCTC 11857 / SLCC 5334 / V8</strain>
    </source>
</reference>
<proteinExistence type="inferred from homology"/>
<keyword id="KW-0028">Amino-acid biosynthesis</keyword>
<keyword id="KW-0055">Arginine biosynthesis</keyword>
<keyword id="KW-0067">ATP-binding</keyword>
<keyword id="KW-0963">Cytoplasm</keyword>
<keyword id="KW-0418">Kinase</keyword>
<keyword id="KW-0547">Nucleotide-binding</keyword>
<keyword id="KW-0808">Transferase</keyword>
<sequence>MENIIVIKLGGTASDNLTENFFQKITEWQGAEKKIVLVHGGGHYITKMMEALQIPVETKNGLRITNQQALEVTKMVLIGQVQPTITSAFQKRGISVIGLNAGDTGLLEAERLNDRDLGLVGKITKVKTNLIEQLLAGNIITVIAPLGIDNTYNWLNVNADTAACEVASALKAEALYLLTDVPGVKNESEIISEINTTEINKLQTSGVIKGGMIPKLESAAFAAKHGVGQVIITDSLENAGTKIRSKVAIG</sequence>
<name>ARGB_LISW6</name>
<evidence type="ECO:0000255" key="1">
    <source>
        <dbReference type="HAMAP-Rule" id="MF_00082"/>
    </source>
</evidence>
<feature type="chain" id="PRO_1000010505" description="Acetylglutamate kinase">
    <location>
        <begin position="1"/>
        <end position="250"/>
    </location>
</feature>
<feature type="binding site" evidence="1">
    <location>
        <begin position="41"/>
        <end position="42"/>
    </location>
    <ligand>
        <name>substrate</name>
    </ligand>
</feature>
<feature type="binding site" evidence="1">
    <location>
        <position position="63"/>
    </location>
    <ligand>
        <name>substrate</name>
    </ligand>
</feature>
<feature type="binding site" evidence="1">
    <location>
        <position position="156"/>
    </location>
    <ligand>
        <name>substrate</name>
    </ligand>
</feature>
<feature type="site" description="Transition state stabilizer" evidence="1">
    <location>
        <position position="8"/>
    </location>
</feature>
<feature type="site" description="Transition state stabilizer" evidence="1">
    <location>
        <position position="215"/>
    </location>
</feature>
<accession>A0AJ38</accession>